<comment type="function">
    <text evidence="1">Involved in bacillithiol (BSH) biosynthesis. May catalyze the last step of the pathway, the addition of cysteine to glucosamine malate (GlcN-Mal) to generate BSH.</text>
</comment>
<comment type="similarity">
    <text evidence="1">Belongs to the BshC family.</text>
</comment>
<organism>
    <name type="scientific">Staphylococcus aureus (strain N315)</name>
    <dbReference type="NCBI Taxonomy" id="158879"/>
    <lineage>
        <taxon>Bacteria</taxon>
        <taxon>Bacillati</taxon>
        <taxon>Bacillota</taxon>
        <taxon>Bacilli</taxon>
        <taxon>Bacillales</taxon>
        <taxon>Staphylococcaceae</taxon>
        <taxon>Staphylococcus</taxon>
    </lineage>
</organism>
<feature type="chain" id="PRO_0000378261" description="Putative cysteine ligase BshC">
    <location>
        <begin position="1"/>
        <end position="537"/>
    </location>
</feature>
<feature type="coiled-coil region" evidence="1">
    <location>
        <begin position="422"/>
        <end position="450"/>
    </location>
</feature>
<name>BSHC_STAAN</name>
<protein>
    <recommendedName>
        <fullName evidence="1">Putative cysteine ligase BshC</fullName>
        <ecNumber evidence="1">6.-.-.-</ecNumber>
    </recommendedName>
</protein>
<gene>
    <name evidence="1" type="primary">bshC</name>
    <name type="ordered locus">SA1020</name>
</gene>
<proteinExistence type="inferred from homology"/>
<evidence type="ECO:0000255" key="1">
    <source>
        <dbReference type="HAMAP-Rule" id="MF_01867"/>
    </source>
</evidence>
<reference key="1">
    <citation type="journal article" date="2001" name="Lancet">
        <title>Whole genome sequencing of meticillin-resistant Staphylococcus aureus.</title>
        <authorList>
            <person name="Kuroda M."/>
            <person name="Ohta T."/>
            <person name="Uchiyama I."/>
            <person name="Baba T."/>
            <person name="Yuzawa H."/>
            <person name="Kobayashi I."/>
            <person name="Cui L."/>
            <person name="Oguchi A."/>
            <person name="Aoki K."/>
            <person name="Nagai Y."/>
            <person name="Lian J.-Q."/>
            <person name="Ito T."/>
            <person name="Kanamori M."/>
            <person name="Matsumaru H."/>
            <person name="Maruyama A."/>
            <person name="Murakami H."/>
            <person name="Hosoyama A."/>
            <person name="Mizutani-Ui Y."/>
            <person name="Takahashi N.K."/>
            <person name="Sawano T."/>
            <person name="Inoue R."/>
            <person name="Kaito C."/>
            <person name="Sekimizu K."/>
            <person name="Hirakawa H."/>
            <person name="Kuhara S."/>
            <person name="Goto S."/>
            <person name="Yabuzaki J."/>
            <person name="Kanehisa M."/>
            <person name="Yamashita A."/>
            <person name="Oshima K."/>
            <person name="Furuya K."/>
            <person name="Yoshino C."/>
            <person name="Shiba T."/>
            <person name="Hattori M."/>
            <person name="Ogasawara N."/>
            <person name="Hayashi H."/>
            <person name="Hiramatsu K."/>
        </authorList>
    </citation>
    <scope>NUCLEOTIDE SEQUENCE [LARGE SCALE GENOMIC DNA]</scope>
    <source>
        <strain>N315</strain>
    </source>
</reference>
<keyword id="KW-0175">Coiled coil</keyword>
<keyword id="KW-0436">Ligase</keyword>
<dbReference type="EC" id="6.-.-.-" evidence="1"/>
<dbReference type="EMBL" id="BA000018">
    <property type="protein sequence ID" value="BAB42272.1"/>
    <property type="molecule type" value="Genomic_DNA"/>
</dbReference>
<dbReference type="PIR" id="D89889">
    <property type="entry name" value="D89889"/>
</dbReference>
<dbReference type="RefSeq" id="WP_000340465.1">
    <property type="nucleotide sequence ID" value="NC_002745.2"/>
</dbReference>
<dbReference type="SMR" id="Q7A621"/>
<dbReference type="EnsemblBacteria" id="BAB42272">
    <property type="protein sequence ID" value="BAB42272"/>
    <property type="gene ID" value="BAB42272"/>
</dbReference>
<dbReference type="KEGG" id="sau:SA1020"/>
<dbReference type="HOGENOM" id="CLU_022249_0_0_9"/>
<dbReference type="GO" id="GO:0016874">
    <property type="term" value="F:ligase activity"/>
    <property type="evidence" value="ECO:0007669"/>
    <property type="project" value="UniProtKB-UniRule"/>
</dbReference>
<dbReference type="HAMAP" id="MF_01867">
    <property type="entry name" value="BshC"/>
    <property type="match status" value="1"/>
</dbReference>
<dbReference type="InterPro" id="IPR011199">
    <property type="entry name" value="Bacillithiol_biosynth_BshC"/>
</dbReference>
<dbReference type="InterPro" id="IPR055399">
    <property type="entry name" value="CC_BshC"/>
</dbReference>
<dbReference type="InterPro" id="IPR055398">
    <property type="entry name" value="Rossmann-like_BshC"/>
</dbReference>
<dbReference type="NCBIfam" id="TIGR03998">
    <property type="entry name" value="thiol_BshC"/>
    <property type="match status" value="1"/>
</dbReference>
<dbReference type="Pfam" id="PF24850">
    <property type="entry name" value="CC_BshC"/>
    <property type="match status" value="1"/>
</dbReference>
<dbReference type="Pfam" id="PF10079">
    <property type="entry name" value="Rossmann-like_BshC"/>
    <property type="match status" value="1"/>
</dbReference>
<dbReference type="PIRSF" id="PIRSF012535">
    <property type="entry name" value="UCP012535"/>
    <property type="match status" value="1"/>
</dbReference>
<sequence>MDCKVVSLNEKDQFIPKIKSSDPVITGLFQYDAAQQTSFEKRMSKENNGREAALANVIREYMSDLKLSNEQELNIQHLANGSKVVIGGQQAGLFGGPLYTFHKIFSIITLSKELTDTHKQQVVPVFWIAGEDHDFDEVNHTFVYNENHGSLHKVKYHTMEMPETTVSRYYPDKAELKQTLKTMFIHMKETVHTQGLLEICDRIIDQYDSWTDMFKALLHETFKAYGVLFIDAQFEPLRKMEAPMFKKILKKHQLLDDAFRATQQRTQNQGLNAMIQTDTNVHLFLHDENMRQLVSYDGKHFKLNKTDKTYIKEEIINIAENQPELFSNNVVTRPLMEEWLFNTVAFVGGPSEIKYWAELKDVFELFDVEMPIVMPRLRITYLNDRIEKLLSKYNIPLEKVLVDGVEGERSKFIREQASHQFIEKVEGMIEQQRRLNKDLLDEVAGNQNNINLVNKNNEIHIQQYDYLLKRYLLNIERENDISMKQFREIQETLHPMGGLQERIWNPLQILNDFGTDVFKPSTYPPLSYTFDHIIIKP</sequence>
<accession>Q7A621</accession>